<keyword id="KW-0002">3D-structure</keyword>
<keyword id="KW-0175">Coiled coil</keyword>
<keyword id="KW-0963">Cytoplasm</keyword>
<keyword id="KW-0967">Endosome</keyword>
<keyword id="KW-1017">Isopeptide bond</keyword>
<keyword id="KW-0458">Lysosome</keyword>
<keyword id="KW-0472">Membrane</keyword>
<keyword id="KW-0479">Metal-binding</keyword>
<keyword id="KW-0488">Methylation</keyword>
<keyword id="KW-0539">Nucleus</keyword>
<keyword id="KW-0597">Phosphoprotein</keyword>
<keyword id="KW-1185">Reference proteome</keyword>
<keyword id="KW-0832">Ubl conjugation</keyword>
<keyword id="KW-0862">Zinc</keyword>
<keyword id="KW-0863">Zinc-finger</keyword>
<reference key="1">
    <citation type="journal article" date="2002" name="Cell">
        <title>Exchange of N-CoR corepressor and Tip60 coactivator complexes links gene expression by NF-kappaB and beta-amyloid precursor protein.</title>
        <authorList>
            <person name="Baek S.H."/>
            <person name="Ohgi K.A."/>
            <person name="Rose D.W."/>
            <person name="Koo E.H."/>
            <person name="Glass C.K."/>
            <person name="Rosenfeld M.G."/>
        </authorList>
    </citation>
    <scope>NUCLEOTIDE SEQUENCE [MRNA]</scope>
    <scope>SUBUNIT</scope>
    <scope>TISSUE SPECIFICITY</scope>
    <scope>PHOSPHORYLATION</scope>
    <scope>SUBCELLULAR LOCATION</scope>
    <scope>FUNCTION</scope>
    <source>
        <tissue>Brain</tissue>
    </source>
</reference>
<reference key="2">
    <citation type="journal article" date="2004" name="Genome Res.">
        <title>The status, quality, and expansion of the NIH full-length cDNA project: the Mammalian Gene Collection (MGC).</title>
        <authorList>
            <consortium name="The MGC Project Team"/>
        </authorList>
    </citation>
    <scope>NUCLEOTIDE SEQUENCE [LARGE SCALE MRNA]</scope>
    <source>
        <strain>Czech II</strain>
        <strain>FVB/N</strain>
        <tissue>Mammary tumor</tissue>
    </source>
</reference>
<reference key="3">
    <citation type="journal article" date="2005" name="Science">
        <title>The transcriptional landscape of the mammalian genome.</title>
        <authorList>
            <person name="Carninci P."/>
            <person name="Kasukawa T."/>
            <person name="Katayama S."/>
            <person name="Gough J."/>
            <person name="Frith M.C."/>
            <person name="Maeda N."/>
            <person name="Oyama R."/>
            <person name="Ravasi T."/>
            <person name="Lenhard B."/>
            <person name="Wells C."/>
            <person name="Kodzius R."/>
            <person name="Shimokawa K."/>
            <person name="Bajic V.B."/>
            <person name="Brenner S.E."/>
            <person name="Batalov S."/>
            <person name="Forrest A.R."/>
            <person name="Zavolan M."/>
            <person name="Davis M.J."/>
            <person name="Wilming L.G."/>
            <person name="Aidinis V."/>
            <person name="Allen J.E."/>
            <person name="Ambesi-Impiombato A."/>
            <person name="Apweiler R."/>
            <person name="Aturaliya R.N."/>
            <person name="Bailey T.L."/>
            <person name="Bansal M."/>
            <person name="Baxter L."/>
            <person name="Beisel K.W."/>
            <person name="Bersano T."/>
            <person name="Bono H."/>
            <person name="Chalk A.M."/>
            <person name="Chiu K.P."/>
            <person name="Choudhary V."/>
            <person name="Christoffels A."/>
            <person name="Clutterbuck D.R."/>
            <person name="Crowe M.L."/>
            <person name="Dalla E."/>
            <person name="Dalrymple B.P."/>
            <person name="de Bono B."/>
            <person name="Della Gatta G."/>
            <person name="di Bernardo D."/>
            <person name="Down T."/>
            <person name="Engstrom P."/>
            <person name="Fagiolini M."/>
            <person name="Faulkner G."/>
            <person name="Fletcher C.F."/>
            <person name="Fukushima T."/>
            <person name="Furuno M."/>
            <person name="Futaki S."/>
            <person name="Gariboldi M."/>
            <person name="Georgii-Hemming P."/>
            <person name="Gingeras T.R."/>
            <person name="Gojobori T."/>
            <person name="Green R.E."/>
            <person name="Gustincich S."/>
            <person name="Harbers M."/>
            <person name="Hayashi Y."/>
            <person name="Hensch T.K."/>
            <person name="Hirokawa N."/>
            <person name="Hill D."/>
            <person name="Huminiecki L."/>
            <person name="Iacono M."/>
            <person name="Ikeo K."/>
            <person name="Iwama A."/>
            <person name="Ishikawa T."/>
            <person name="Jakt M."/>
            <person name="Kanapin A."/>
            <person name="Katoh M."/>
            <person name="Kawasawa Y."/>
            <person name="Kelso J."/>
            <person name="Kitamura H."/>
            <person name="Kitano H."/>
            <person name="Kollias G."/>
            <person name="Krishnan S.P."/>
            <person name="Kruger A."/>
            <person name="Kummerfeld S.K."/>
            <person name="Kurochkin I.V."/>
            <person name="Lareau L.F."/>
            <person name="Lazarevic D."/>
            <person name="Lipovich L."/>
            <person name="Liu J."/>
            <person name="Liuni S."/>
            <person name="McWilliam S."/>
            <person name="Madan Babu M."/>
            <person name="Madera M."/>
            <person name="Marchionni L."/>
            <person name="Matsuda H."/>
            <person name="Matsuzawa S."/>
            <person name="Miki H."/>
            <person name="Mignone F."/>
            <person name="Miyake S."/>
            <person name="Morris K."/>
            <person name="Mottagui-Tabar S."/>
            <person name="Mulder N."/>
            <person name="Nakano N."/>
            <person name="Nakauchi H."/>
            <person name="Ng P."/>
            <person name="Nilsson R."/>
            <person name="Nishiguchi S."/>
            <person name="Nishikawa S."/>
            <person name="Nori F."/>
            <person name="Ohara O."/>
            <person name="Okazaki Y."/>
            <person name="Orlando V."/>
            <person name="Pang K.C."/>
            <person name="Pavan W.J."/>
            <person name="Pavesi G."/>
            <person name="Pesole G."/>
            <person name="Petrovsky N."/>
            <person name="Piazza S."/>
            <person name="Reed J."/>
            <person name="Reid J.F."/>
            <person name="Ring B.Z."/>
            <person name="Ringwald M."/>
            <person name="Rost B."/>
            <person name="Ruan Y."/>
            <person name="Salzberg S.L."/>
            <person name="Sandelin A."/>
            <person name="Schneider C."/>
            <person name="Schoenbach C."/>
            <person name="Sekiguchi K."/>
            <person name="Semple C.A."/>
            <person name="Seno S."/>
            <person name="Sessa L."/>
            <person name="Sheng Y."/>
            <person name="Shibata Y."/>
            <person name="Shimada H."/>
            <person name="Shimada K."/>
            <person name="Silva D."/>
            <person name="Sinclair B."/>
            <person name="Sperling S."/>
            <person name="Stupka E."/>
            <person name="Sugiura K."/>
            <person name="Sultana R."/>
            <person name="Takenaka Y."/>
            <person name="Taki K."/>
            <person name="Tammoja K."/>
            <person name="Tan S.L."/>
            <person name="Tang S."/>
            <person name="Taylor M.S."/>
            <person name="Tegner J."/>
            <person name="Teichmann S.A."/>
            <person name="Ueda H.R."/>
            <person name="van Nimwegen E."/>
            <person name="Verardo R."/>
            <person name="Wei C.L."/>
            <person name="Yagi K."/>
            <person name="Yamanishi H."/>
            <person name="Zabarovsky E."/>
            <person name="Zhu S."/>
            <person name="Zimmer A."/>
            <person name="Hide W."/>
            <person name="Bult C."/>
            <person name="Grimmond S.M."/>
            <person name="Teasdale R.D."/>
            <person name="Liu E.T."/>
            <person name="Brusic V."/>
            <person name="Quackenbush J."/>
            <person name="Wahlestedt C."/>
            <person name="Mattick J.S."/>
            <person name="Hume D.A."/>
            <person name="Kai C."/>
            <person name="Sasaki D."/>
            <person name="Tomaru Y."/>
            <person name="Fukuda S."/>
            <person name="Kanamori-Katayama M."/>
            <person name="Suzuki M."/>
            <person name="Aoki J."/>
            <person name="Arakawa T."/>
            <person name="Iida J."/>
            <person name="Imamura K."/>
            <person name="Itoh M."/>
            <person name="Kato T."/>
            <person name="Kawaji H."/>
            <person name="Kawagashira N."/>
            <person name="Kawashima T."/>
            <person name="Kojima M."/>
            <person name="Kondo S."/>
            <person name="Konno H."/>
            <person name="Nakano K."/>
            <person name="Ninomiya N."/>
            <person name="Nishio T."/>
            <person name="Okada M."/>
            <person name="Plessy C."/>
            <person name="Shibata K."/>
            <person name="Shiraki T."/>
            <person name="Suzuki S."/>
            <person name="Tagami M."/>
            <person name="Waki K."/>
            <person name="Watahiki A."/>
            <person name="Okamura-Oho Y."/>
            <person name="Suzuki H."/>
            <person name="Kawai J."/>
            <person name="Hayashizaki Y."/>
        </authorList>
    </citation>
    <scope>NUCLEOTIDE SEQUENCE [LARGE SCALE MRNA] OF 1-595</scope>
    <source>
        <strain>C57BL/6J</strain>
        <strain>NOD</strain>
    </source>
</reference>
<reference key="4">
    <citation type="journal article" date="2002" name="DNA Res.">
        <title>Prediction of the coding sequences of mouse homologues of KIAA gene: I. The complete nucleotide sequences of 100 mouse KIAA-homologous cDNAs identified by screening of terminal sequences of cDNA clones randomly sampled from size-fractionated libraries.</title>
        <authorList>
            <person name="Okazaki N."/>
            <person name="Kikuno R."/>
            <person name="Ohara R."/>
            <person name="Inamoto S."/>
            <person name="Hara Y."/>
            <person name="Nagase T."/>
            <person name="Ohara O."/>
            <person name="Koga H."/>
        </authorList>
    </citation>
    <scope>NUCLEOTIDE SEQUENCE [LARGE SCALE MRNA] OF 9-693</scope>
    <source>
        <tissue>Embryonic tail</tissue>
    </source>
</reference>
<reference key="5">
    <citation type="journal article" date="2007" name="Proc. Natl. Acad. Sci. U.S.A.">
        <title>Large-scale phosphorylation analysis of mouse liver.</title>
        <authorList>
            <person name="Villen J."/>
            <person name="Beausoleil S.A."/>
            <person name="Gerber S.A."/>
            <person name="Gygi S.P."/>
        </authorList>
    </citation>
    <scope>IDENTIFICATION BY MASS SPECTROMETRY [LARGE SCALE ANALYSIS]</scope>
    <source>
        <tissue>Liver</tissue>
    </source>
</reference>
<reference key="6">
    <citation type="journal article" date="2009" name="Immunity">
        <title>The phagosomal proteome in interferon-gamma-activated macrophages.</title>
        <authorList>
            <person name="Trost M."/>
            <person name="English L."/>
            <person name="Lemieux S."/>
            <person name="Courcelles M."/>
            <person name="Desjardins M."/>
            <person name="Thibault P."/>
        </authorList>
    </citation>
    <scope>IDENTIFICATION BY MASS SPECTROMETRY [LARGE SCALE ANALYSIS]</scope>
</reference>
<reference key="7">
    <citation type="journal article" date="2010" name="Cell">
        <title>A tissue-specific atlas of mouse protein phosphorylation and expression.</title>
        <authorList>
            <person name="Huttlin E.L."/>
            <person name="Jedrychowski M.P."/>
            <person name="Elias J.E."/>
            <person name="Goswami T."/>
            <person name="Rad R."/>
            <person name="Beausoleil S.A."/>
            <person name="Villen J."/>
            <person name="Haas W."/>
            <person name="Sowa M.E."/>
            <person name="Gygi S.P."/>
        </authorList>
    </citation>
    <scope>PHOSPHORYLATION [LARGE SCALE ANALYSIS] AT SER-524</scope>
    <scope>IDENTIFICATION BY MASS SPECTROMETRY [LARGE SCALE ANALYSIS]</scope>
    <source>
        <tissue>Heart</tissue>
        <tissue>Lung</tissue>
        <tissue>Spleen</tissue>
    </source>
</reference>
<reference key="8">
    <citation type="journal article" date="2014" name="Mol. Cell. Proteomics">
        <title>Immunoaffinity enrichment and mass spectrometry analysis of protein methylation.</title>
        <authorList>
            <person name="Guo A."/>
            <person name="Gu H."/>
            <person name="Zhou J."/>
            <person name="Mulhern D."/>
            <person name="Wang Y."/>
            <person name="Lee K.A."/>
            <person name="Yang V."/>
            <person name="Aguiar M."/>
            <person name="Kornhauser J."/>
            <person name="Jia X."/>
            <person name="Ren J."/>
            <person name="Beausoleil S.A."/>
            <person name="Silva J.C."/>
            <person name="Vemulapalli V."/>
            <person name="Bedford M.T."/>
            <person name="Comb M.J."/>
        </authorList>
    </citation>
    <scope>METHYLATION [LARGE SCALE ANALYSIS] AT ARG-173</scope>
    <scope>IDENTIFICATION BY MASS SPECTROMETRY [LARGE SCALE ANALYSIS]</scope>
    <source>
        <tissue>Brain</tissue>
        <tissue>Embryo</tissue>
    </source>
</reference>
<reference key="9">
    <citation type="journal article" date="2009" name="EMBO J.">
        <title>Structural basis for specific recognition of Lys 63-linked polyubiquitin chains by NZF domains of TAB2 and TAB3.</title>
        <authorList>
            <person name="Sato Y."/>
            <person name="Yoshikawa A."/>
            <person name="Yamashita M."/>
            <person name="Yamagata A."/>
            <person name="Fukai S."/>
        </authorList>
    </citation>
    <scope>X-RAY CRYSTALLOGRAPHY (1.18 ANGSTROMS) OF 665-693 IN COMPLEX WITH ZINC IONS AND 'LYS-63'-LINKED UBIQUITIN</scope>
    <scope>FUNCTION</scope>
    <scope>LINKAGE-SPECIFIC INTERACTION WITH UBIQUITIN</scope>
    <scope>NZF DOMAIN</scope>
    <scope>SUBUNIT</scope>
    <scope>MUTAGENESIS OF THR-674; PHE-675; HIS-678; LEU-681; GLU-685 AND GLN-686</scope>
</reference>
<dbReference type="EMBL" id="AY093701">
    <property type="protein sequence ID" value="AAM10487.1"/>
    <property type="molecule type" value="mRNA"/>
</dbReference>
<dbReference type="EMBL" id="BC004072">
    <property type="protein sequence ID" value="AAH04072.1"/>
    <property type="molecule type" value="mRNA"/>
</dbReference>
<dbReference type="EMBL" id="BC004813">
    <property type="protein sequence ID" value="AAH04813.1"/>
    <property type="molecule type" value="mRNA"/>
</dbReference>
<dbReference type="EMBL" id="AK089164">
    <property type="protein sequence ID" value="BAC40772.1"/>
    <property type="status" value="ALT_FRAME"/>
    <property type="molecule type" value="mRNA"/>
</dbReference>
<dbReference type="EMBL" id="AK147830">
    <property type="protein sequence ID" value="BAE28166.1"/>
    <property type="molecule type" value="mRNA"/>
</dbReference>
<dbReference type="EMBL" id="AB093262">
    <property type="protein sequence ID" value="BAC41446.1"/>
    <property type="molecule type" value="mRNA"/>
</dbReference>
<dbReference type="CCDS" id="CCDS23691.1"/>
<dbReference type="RefSeq" id="NP_001346463.1">
    <property type="nucleotide sequence ID" value="NM_001359534.1"/>
</dbReference>
<dbReference type="RefSeq" id="NP_619608.1">
    <property type="nucleotide sequence ID" value="NM_138667.3"/>
</dbReference>
<dbReference type="RefSeq" id="XP_017169562.1">
    <property type="nucleotide sequence ID" value="XM_017314073.1"/>
</dbReference>
<dbReference type="RefSeq" id="XP_036011867.1">
    <property type="nucleotide sequence ID" value="XM_036155974.1"/>
</dbReference>
<dbReference type="PDB" id="3A9J">
    <property type="method" value="X-ray"/>
    <property type="resolution" value="1.18 A"/>
    <property type="chains" value="C=665-693"/>
</dbReference>
<dbReference type="PDB" id="7E62">
    <property type="method" value="X-ray"/>
    <property type="resolution" value="1.99 A"/>
    <property type="chains" value="C/J=644-693"/>
</dbReference>
<dbReference type="PDBsum" id="3A9J"/>
<dbReference type="PDBsum" id="7E62"/>
<dbReference type="BMRB" id="Q99K90"/>
<dbReference type="SMR" id="Q99K90"/>
<dbReference type="BioGRID" id="212973">
    <property type="interactions" value="13"/>
</dbReference>
<dbReference type="FunCoup" id="Q99K90">
    <property type="interactions" value="3826"/>
</dbReference>
<dbReference type="IntAct" id="Q99K90">
    <property type="interactions" value="4"/>
</dbReference>
<dbReference type="MINT" id="Q99K90"/>
<dbReference type="STRING" id="10090.ENSMUSP00000121266"/>
<dbReference type="GlyGen" id="Q99K90">
    <property type="glycosylation" value="6 sites, 1 N-linked glycan (1 site), 1 O-linked glycan (5 sites)"/>
</dbReference>
<dbReference type="iPTMnet" id="Q99K90"/>
<dbReference type="PhosphoSitePlus" id="Q99K90"/>
<dbReference type="jPOST" id="Q99K90"/>
<dbReference type="PaxDb" id="10090-ENSMUSP00000121266"/>
<dbReference type="ProteomicsDB" id="254488"/>
<dbReference type="Pumba" id="Q99K90"/>
<dbReference type="Antibodypedia" id="19871">
    <property type="antibodies" value="234 antibodies from 36 providers"/>
</dbReference>
<dbReference type="DNASU" id="68652"/>
<dbReference type="Ensembl" id="ENSMUST00000146444.8">
    <property type="protein sequence ID" value="ENSMUSP00000121266.2"/>
    <property type="gene ID" value="ENSMUSG00000015755.17"/>
</dbReference>
<dbReference type="GeneID" id="68652"/>
<dbReference type="KEGG" id="mmu:68652"/>
<dbReference type="UCSC" id="uc007eir.2">
    <property type="organism name" value="mouse"/>
</dbReference>
<dbReference type="AGR" id="MGI:1915902"/>
<dbReference type="CTD" id="23118"/>
<dbReference type="MGI" id="MGI:1915902">
    <property type="gene designation" value="Tab2"/>
</dbReference>
<dbReference type="VEuPathDB" id="HostDB:ENSMUSG00000015755"/>
<dbReference type="eggNOG" id="ENOG502QRAY">
    <property type="taxonomic scope" value="Eukaryota"/>
</dbReference>
<dbReference type="GeneTree" id="ENSGT00940000158473"/>
<dbReference type="HOGENOM" id="CLU_025065_0_0_1"/>
<dbReference type="InParanoid" id="Q99K90"/>
<dbReference type="OMA" id="GPTFIHH"/>
<dbReference type="OrthoDB" id="6288762at2759"/>
<dbReference type="PhylomeDB" id="Q99K90"/>
<dbReference type="TreeFam" id="TF332021"/>
<dbReference type="Reactome" id="R-MMU-168638">
    <property type="pathway name" value="NOD1/2 Signaling Pathway"/>
</dbReference>
<dbReference type="Reactome" id="R-MMU-202424">
    <property type="pathway name" value="Downstream TCR signaling"/>
</dbReference>
<dbReference type="Reactome" id="R-MMU-2871837">
    <property type="pathway name" value="FCERI mediated NF-kB activation"/>
</dbReference>
<dbReference type="Reactome" id="R-MMU-445989">
    <property type="pathway name" value="TAK1-dependent IKK and NF-kappa-B activation"/>
</dbReference>
<dbReference type="Reactome" id="R-MMU-450302">
    <property type="pathway name" value="activated TAK1 mediates p38 MAPK activation"/>
</dbReference>
<dbReference type="Reactome" id="R-MMU-450321">
    <property type="pathway name" value="JNK (c-Jun kinases) phosphorylation and activation mediated by activated human TAK1"/>
</dbReference>
<dbReference type="Reactome" id="R-MMU-5357956">
    <property type="pathway name" value="TNFR1-induced NF-kappa-B signaling pathway"/>
</dbReference>
<dbReference type="Reactome" id="R-MMU-5607764">
    <property type="pathway name" value="CLEC7A (Dectin-1) signaling"/>
</dbReference>
<dbReference type="Reactome" id="R-MMU-9020702">
    <property type="pathway name" value="Interleukin-1 signaling"/>
</dbReference>
<dbReference type="Reactome" id="R-MMU-937042">
    <property type="pathway name" value="IRAK2 mediated activation of TAK1 complex"/>
</dbReference>
<dbReference type="Reactome" id="R-MMU-937072">
    <property type="pathway name" value="TRAF6-mediated induction of TAK1 complex within TLR4 complex"/>
</dbReference>
<dbReference type="Reactome" id="R-MMU-9645460">
    <property type="pathway name" value="Alpha-protein kinase 1 signaling pathway"/>
</dbReference>
<dbReference type="Reactome" id="R-MMU-975163">
    <property type="pathway name" value="IRAK2 mediated activation of TAK1 complex upon TLR7/8 or 9 stimulation"/>
</dbReference>
<dbReference type="BioGRID-ORCS" id="68652">
    <property type="hits" value="24 hits in 79 CRISPR screens"/>
</dbReference>
<dbReference type="ChiTaRS" id="Tab2">
    <property type="organism name" value="mouse"/>
</dbReference>
<dbReference type="EvolutionaryTrace" id="Q99K90"/>
<dbReference type="PRO" id="PR:Q99K90"/>
<dbReference type="Proteomes" id="UP000000589">
    <property type="component" value="Chromosome 10"/>
</dbReference>
<dbReference type="RNAct" id="Q99K90">
    <property type="molecule type" value="protein"/>
</dbReference>
<dbReference type="Bgee" id="ENSMUSG00000015755">
    <property type="expression patterns" value="Expressed in plantaris and 266 other cell types or tissues"/>
</dbReference>
<dbReference type="ExpressionAtlas" id="Q99K90">
    <property type="expression patterns" value="baseline and differential"/>
</dbReference>
<dbReference type="GO" id="GO:0005829">
    <property type="term" value="C:cytosol"/>
    <property type="evidence" value="ECO:0000304"/>
    <property type="project" value="Reactome"/>
</dbReference>
<dbReference type="GO" id="GO:0010008">
    <property type="term" value="C:endosome membrane"/>
    <property type="evidence" value="ECO:0007669"/>
    <property type="project" value="UniProtKB-SubCell"/>
</dbReference>
<dbReference type="GO" id="GO:0005765">
    <property type="term" value="C:lysosomal membrane"/>
    <property type="evidence" value="ECO:0007669"/>
    <property type="project" value="UniProtKB-SubCell"/>
</dbReference>
<dbReference type="GO" id="GO:0005654">
    <property type="term" value="C:nucleoplasm"/>
    <property type="evidence" value="ECO:0000304"/>
    <property type="project" value="Reactome"/>
</dbReference>
<dbReference type="GO" id="GO:0070530">
    <property type="term" value="F:K63-linked polyubiquitin modification-dependent protein binding"/>
    <property type="evidence" value="ECO:0000250"/>
    <property type="project" value="UniProtKB"/>
</dbReference>
<dbReference type="GO" id="GO:0060090">
    <property type="term" value="F:molecular adaptor activity"/>
    <property type="evidence" value="ECO:0007669"/>
    <property type="project" value="Ensembl"/>
</dbReference>
<dbReference type="GO" id="GO:0043130">
    <property type="term" value="F:ubiquitin binding"/>
    <property type="evidence" value="ECO:0007669"/>
    <property type="project" value="InterPro"/>
</dbReference>
<dbReference type="GO" id="GO:0008270">
    <property type="term" value="F:zinc ion binding"/>
    <property type="evidence" value="ECO:0000250"/>
    <property type="project" value="UniProtKB"/>
</dbReference>
<dbReference type="GO" id="GO:0042742">
    <property type="term" value="P:defense response to bacterium"/>
    <property type="evidence" value="ECO:0007669"/>
    <property type="project" value="Ensembl"/>
</dbReference>
<dbReference type="GO" id="GO:0007507">
    <property type="term" value="P:heart development"/>
    <property type="evidence" value="ECO:0000250"/>
    <property type="project" value="UniProtKB"/>
</dbReference>
<dbReference type="GO" id="GO:0006954">
    <property type="term" value="P:inflammatory response"/>
    <property type="evidence" value="ECO:0007669"/>
    <property type="project" value="Ensembl"/>
</dbReference>
<dbReference type="GO" id="GO:0038061">
    <property type="term" value="P:non-canonical NF-kappaB signal transduction"/>
    <property type="evidence" value="ECO:0007669"/>
    <property type="project" value="Ensembl"/>
</dbReference>
<dbReference type="GO" id="GO:0043123">
    <property type="term" value="P:positive regulation of canonical NF-kappaB signal transduction"/>
    <property type="evidence" value="ECO:0000250"/>
    <property type="project" value="UniProtKB"/>
</dbReference>
<dbReference type="GO" id="GO:0045860">
    <property type="term" value="P:positive regulation of protein kinase activity"/>
    <property type="evidence" value="ECO:0000250"/>
    <property type="project" value="UniProtKB"/>
</dbReference>
<dbReference type="GO" id="GO:0032496">
    <property type="term" value="P:response to lipopolysaccharide"/>
    <property type="evidence" value="ECO:0007669"/>
    <property type="project" value="Ensembl"/>
</dbReference>
<dbReference type="CDD" id="cd14362">
    <property type="entry name" value="CUE_TAB2_TAB3"/>
    <property type="match status" value="1"/>
</dbReference>
<dbReference type="FunFam" id="2.30.30.380:FF:000006">
    <property type="entry name" value="TGF-beta activated kinase 1 (MAP3K7) binding protein 2"/>
    <property type="match status" value="1"/>
</dbReference>
<dbReference type="FunFam" id="1.10.8.10:FF:000025">
    <property type="entry name" value="TGF-beta-activated kinase 1 and MAP3K7-binding protein 3"/>
    <property type="match status" value="1"/>
</dbReference>
<dbReference type="Gene3D" id="1.10.8.10">
    <property type="entry name" value="DNA helicase RuvA subunit, C-terminal domain"/>
    <property type="match status" value="1"/>
</dbReference>
<dbReference type="Gene3D" id="2.30.30.380">
    <property type="entry name" value="Zn-finger domain of Sec23/24"/>
    <property type="match status" value="1"/>
</dbReference>
<dbReference type="InterPro" id="IPR003892">
    <property type="entry name" value="CUE"/>
</dbReference>
<dbReference type="InterPro" id="IPR041911">
    <property type="entry name" value="TAB2/3_CUE"/>
</dbReference>
<dbReference type="InterPro" id="IPR001876">
    <property type="entry name" value="Znf_RanBP2"/>
</dbReference>
<dbReference type="InterPro" id="IPR036443">
    <property type="entry name" value="Znf_RanBP2_sf"/>
</dbReference>
<dbReference type="PANTHER" id="PTHR46253:SF2">
    <property type="entry name" value="TGF-BETA-ACTIVATED KINASE 1 AND MAP3K7-BINDING PROTEIN 2"/>
    <property type="match status" value="1"/>
</dbReference>
<dbReference type="PANTHER" id="PTHR46253">
    <property type="entry name" value="TGF-BETA-ACTIVATED KINASE 1 AND MAP3K7-BINDING PROTEIN TAB"/>
    <property type="match status" value="1"/>
</dbReference>
<dbReference type="Pfam" id="PF02845">
    <property type="entry name" value="CUE"/>
    <property type="match status" value="1"/>
</dbReference>
<dbReference type="SMART" id="SM00546">
    <property type="entry name" value="CUE"/>
    <property type="match status" value="1"/>
</dbReference>
<dbReference type="SMART" id="SM00547">
    <property type="entry name" value="ZnF_RBZ"/>
    <property type="match status" value="1"/>
</dbReference>
<dbReference type="SUPFAM" id="SSF90209">
    <property type="entry name" value="Ran binding protein zinc finger-like"/>
    <property type="match status" value="1"/>
</dbReference>
<dbReference type="PROSITE" id="PS51140">
    <property type="entry name" value="CUE"/>
    <property type="match status" value="1"/>
</dbReference>
<dbReference type="PROSITE" id="PS01358">
    <property type="entry name" value="ZF_RANBP2_1"/>
    <property type="match status" value="1"/>
</dbReference>
<dbReference type="PROSITE" id="PS50199">
    <property type="entry name" value="ZF_RANBP2_2"/>
    <property type="match status" value="1"/>
</dbReference>
<organism>
    <name type="scientific">Mus musculus</name>
    <name type="common">Mouse</name>
    <dbReference type="NCBI Taxonomy" id="10090"/>
    <lineage>
        <taxon>Eukaryota</taxon>
        <taxon>Metazoa</taxon>
        <taxon>Chordata</taxon>
        <taxon>Craniata</taxon>
        <taxon>Vertebrata</taxon>
        <taxon>Euteleostomi</taxon>
        <taxon>Mammalia</taxon>
        <taxon>Eutheria</taxon>
        <taxon>Euarchontoglires</taxon>
        <taxon>Glires</taxon>
        <taxon>Rodentia</taxon>
        <taxon>Myomorpha</taxon>
        <taxon>Muroidea</taxon>
        <taxon>Muridae</taxon>
        <taxon>Murinae</taxon>
        <taxon>Mus</taxon>
        <taxon>Mus</taxon>
    </lineage>
</organism>
<comment type="function">
    <text evidence="1 6 7">Adapter required to activate the JNK and NF-kappa-B signaling pathways through the specific recognition of 'Lys-63'-linked polyubiquitin chains by its RanBP2-type zinc finger (NZF) (By similarity). Acts as an adapter linking MAP3K7/TAK1 and TRAF6 to 'Lys-63'-linked polyubiquitin chains (By similarity). The RanBP2-type zinc finger (NZF) specifically recognizes Lys-63'-linked polyubiquitin chains unanchored or anchored to the substrate proteins such as RIPK1/RIP1 and RIPK2: this acts as a scaffold to organize a large signaling complex to promote autophosphorylation of MAP3K7/TAK1, and subsequent activation of I-kappa-B-kinase (IKK) core complex by MAP3K7/TAK1 (PubMed:19927120). Also recognizes and binds Lys-63'-linked polyubiquitin chains of heterotypic 'Lys-63'-/'Lys-48'-linked branched ubiquitin chains (By similarity). Regulates the IL1-mediated translocation of NCOR1 out of the nucleus (PubMed:12150997). Involved in heart development (By similarity).</text>
</comment>
<comment type="subunit">
    <text evidence="1 6">Interacts with MAP3K7 and TRAF6. Identified in the TRIKA2 complex composed of MAP3K7, TAB1 and TAB2. Binds 'Lys-63'-linked polyubiquitin chains (By similarity). Interacts with NCOR1 and HDAC3 to form a ternary complex (PubMed:12150997). Interacts (via C-terminal) with NUMBL (via PTB domain). Interacts (via the C-terminus) with DYNC2I2 (via WD domains). Interacts with RBCK1. Interacts with TRIM5 (By similarity). Interacts with TRIM38 (via B30.2/SPRY domain), leading to its translocation to lysosomes and degradation (By similarity). Interacts with ASB1; this interaction promotes TAB2 stability (By similarity).</text>
</comment>
<comment type="interaction">
    <interactant intactId="EBI-1775124">
        <id>Q99K90</id>
    </interactant>
    <interactant intactId="EBI-1775345">
        <id>Q62073</id>
        <label>Map3k7</label>
    </interactant>
    <organismsDiffer>false</organismsDiffer>
    <experiments>8</experiments>
</comment>
<comment type="interaction">
    <interactant intactId="EBI-1775124">
        <id>Q99K90</id>
    </interactant>
    <interactant intactId="EBI-413074">
        <id>P62991</id>
        <label>Ubc</label>
    </interactant>
    <organismsDiffer>false</organismsDiffer>
    <experiments>9</experiments>
</comment>
<comment type="subcellular location">
    <subcellularLocation>
        <location evidence="1">Membrane</location>
        <topology evidence="1">Peripheral membrane protein</topology>
    </subcellularLocation>
    <subcellularLocation>
        <location evidence="1">Endosome membrane</location>
        <topology evidence="1">Peripheral membrane protein</topology>
    </subcellularLocation>
    <subcellularLocation>
        <location evidence="1">Lysosome membrane</location>
        <topology evidence="1">Peripheral membrane protein</topology>
    </subcellularLocation>
    <subcellularLocation>
        <location evidence="6">Cytoplasm</location>
        <location evidence="6">Cytosol</location>
    </subcellularLocation>
    <subcellularLocation>
        <location evidence="6">Nucleus</location>
    </subcellularLocation>
    <text evidence="1">Following IL1 stimulation, translocation occurs from the membrane to cytosol. Interaction with TRIM38 promotes translocation from cytosol to endosome and lysosome.</text>
</comment>
<comment type="tissue specificity">
    <text evidence="6">Widely expressed.</text>
</comment>
<comment type="domain">
    <text evidence="7">The RanBP2-type zinc finger (NZF) mediates binding to two consecutive 'Lys-63'-linked ubiquitins.</text>
</comment>
<comment type="PTM">
    <text evidence="1">SUMOylated by TRIM60; leading to inhibition of MAPK/NF-kappaB activation and the innate immune response.</text>
</comment>
<comment type="PTM">
    <text evidence="1">Ubiquitinated; following IL1 stimulation or TRAF6 overexpression. Ubiquitination involves RBCK1 leading to proteasomal degradation. Ubiquitinated at Lys-611 by TRIM45 leading to proteasomal degradation.</text>
</comment>
<comment type="PTM">
    <text evidence="1">Degraded in a lysosome-dependent manner following interaction with TRIM38.</text>
</comment>
<comment type="PTM">
    <text evidence="9">Phosphorylated.</text>
</comment>
<comment type="sequence caution" evidence="8">
    <conflict type="frameshift">
        <sequence resource="EMBL-CDS" id="BAC40772"/>
    </conflict>
</comment>
<sequence length="693" mass="76442">MAQGSHQIDFQVLHDLRQKFPEVPEVVVSRCMLQNNNNLDACCAVLSQESTRYLYGEGDLNFSDESGISGLRNHMTSLNLDLQSQNVYHHGREGSRVNGSRTLTHSVSDGQLHGGQSNNELFQQEPQTAPAQVPQGFNVFGMPSTSGASNSTPHLGFHLGSKGTSNLSQQTPRFNPIMVTLAPNIQTGRSTPTSLHIHGVPPPVLNSPQGNSIYIRPYITTPSGTARQTQQHSGWVSQFNPMNPQQAYQPSQPGPWTTYPASNPLPHTSTQQPNQQGHQTSHVYMPISSPTTPQPPTIHSSGSSQSSAHSQYNIQNISTGPRKNQIEIKLEPPQRNSSSKLRSSGPRTASTSSLVNSQTLNRNQPTVYIAASPPNTDEMISRSQPKVYISANATAGDEQGMRNQPTLFISTNSGPSAASRNMSGQVSMGPAFIHHHPPKSRVLGGNSATSPRVVVTQPNTKYTFKITVSPNKPPAVSPGVVSPTFELTNLLNHPDHYVETENIQHLTDPALAHVDRISEARKLSMGSDDAAYTQALLVHQKARMERLQRELEMQKKKLDKLKSEVNEMENNLTRRRLKRSNSISQIPSLEEMQQLRSCNRQLQIDIDCLTKEIDLFQARGPHFNPSAIHNFYDNIGFVGPVPPKPKDQRSTIKAPKTQDAEDEEGAQWNCTACTFLNHPALIRCEQCEMPRHF</sequence>
<evidence type="ECO:0000250" key="1">
    <source>
        <dbReference type="UniProtKB" id="Q9NYJ8"/>
    </source>
</evidence>
<evidence type="ECO:0000255" key="2"/>
<evidence type="ECO:0000255" key="3">
    <source>
        <dbReference type="PROSITE-ProRule" id="PRU00322"/>
    </source>
</evidence>
<evidence type="ECO:0000255" key="4">
    <source>
        <dbReference type="PROSITE-ProRule" id="PRU00468"/>
    </source>
</evidence>
<evidence type="ECO:0000256" key="5">
    <source>
        <dbReference type="SAM" id="MobiDB-lite"/>
    </source>
</evidence>
<evidence type="ECO:0000269" key="6">
    <source>
    </source>
</evidence>
<evidence type="ECO:0000269" key="7">
    <source>
    </source>
</evidence>
<evidence type="ECO:0000305" key="8"/>
<evidence type="ECO:0000305" key="9">
    <source>
    </source>
</evidence>
<evidence type="ECO:0007744" key="10">
    <source>
    </source>
</evidence>
<evidence type="ECO:0007744" key="11">
    <source>
    </source>
</evidence>
<evidence type="ECO:0007829" key="12">
    <source>
        <dbReference type="PDB" id="3A9J"/>
    </source>
</evidence>
<protein>
    <recommendedName>
        <fullName>TGF-beta-activated kinase 1 and MAP3K7-binding protein 2</fullName>
    </recommendedName>
    <alternativeName>
        <fullName>Mitogen-activated protein kinase kinase kinase 7-interacting protein 2</fullName>
    </alternativeName>
    <alternativeName>
        <fullName>TAK1-binding protein 2</fullName>
        <shortName>TAB-2</shortName>
    </alternativeName>
    <alternativeName>
        <fullName>TGF-beta-activated kinase 1-binding protein 2</fullName>
    </alternativeName>
</protein>
<feature type="chain" id="PRO_0000225696" description="TGF-beta-activated kinase 1 and MAP3K7-binding protein 2">
    <location>
        <begin position="1"/>
        <end position="693"/>
    </location>
</feature>
<feature type="domain" description="CUE" evidence="4">
    <location>
        <begin position="8"/>
        <end position="51"/>
    </location>
</feature>
<feature type="zinc finger region" description="RanBP2-type" evidence="3">
    <location>
        <begin position="663"/>
        <end position="693"/>
    </location>
</feature>
<feature type="region of interest" description="Disordered" evidence="5">
    <location>
        <begin position="90"/>
        <end position="171"/>
    </location>
</feature>
<feature type="region of interest" description="Disordered" evidence="5">
    <location>
        <begin position="223"/>
        <end position="310"/>
    </location>
</feature>
<feature type="region of interest" description="Disordered" evidence="5">
    <location>
        <begin position="330"/>
        <end position="380"/>
    </location>
</feature>
<feature type="region of interest" description="Disordered" evidence="5">
    <location>
        <begin position="640"/>
        <end position="663"/>
    </location>
</feature>
<feature type="region of interest" description="Interaction with polyubiquitin" evidence="7">
    <location>
        <begin position="675"/>
        <end position="685"/>
    </location>
</feature>
<feature type="coiled-coil region" evidence="2">
    <location>
        <begin position="532"/>
        <end position="619"/>
    </location>
</feature>
<feature type="compositionally biased region" description="Polar residues" evidence="5">
    <location>
        <begin position="97"/>
        <end position="130"/>
    </location>
</feature>
<feature type="compositionally biased region" description="Polar residues" evidence="5">
    <location>
        <begin position="143"/>
        <end position="153"/>
    </location>
</feature>
<feature type="compositionally biased region" description="Polar residues" evidence="5">
    <location>
        <begin position="162"/>
        <end position="171"/>
    </location>
</feature>
<feature type="compositionally biased region" description="Polar residues" evidence="5">
    <location>
        <begin position="223"/>
        <end position="282"/>
    </location>
</feature>
<feature type="compositionally biased region" description="Low complexity" evidence="5">
    <location>
        <begin position="286"/>
        <end position="310"/>
    </location>
</feature>
<feature type="compositionally biased region" description="Polar residues" evidence="5">
    <location>
        <begin position="334"/>
        <end position="366"/>
    </location>
</feature>
<feature type="modified residue" description="Asymmetric dimethylarginine" evidence="11">
    <location>
        <position position="173"/>
    </location>
</feature>
<feature type="modified residue" description="Phosphoserine" evidence="1">
    <location>
        <position position="372"/>
    </location>
</feature>
<feature type="modified residue" description="Phosphoserine" evidence="1">
    <location>
        <position position="450"/>
    </location>
</feature>
<feature type="modified residue" description="Phosphoserine" evidence="1">
    <location>
        <position position="482"/>
    </location>
</feature>
<feature type="modified residue" description="Phosphoserine" evidence="10">
    <location>
        <position position="524"/>
    </location>
</feature>
<feature type="modified residue" description="Phosphoserine" evidence="1">
    <location>
        <position position="582"/>
    </location>
</feature>
<feature type="cross-link" description="Glycyl lysine isopeptide (Lys-Gly) (interchain with G-Cter in SUMO)" evidence="1">
    <location>
        <position position="329"/>
    </location>
</feature>
<feature type="cross-link" description="Glycyl lysine isopeptide (Lys-Gly) (interchain with G-Cter in SUMO)" evidence="1">
    <location>
        <position position="562"/>
    </location>
</feature>
<feature type="cross-link" description="Glycyl lysine isopeptide (Lys-Gly) (interchain with G-Cter in ubiquitin)" evidence="1">
    <location>
        <position position="611"/>
    </location>
</feature>
<feature type="mutagenesis site" description="Loss of interaction with 'Lys-63'-linked ubiquitin." evidence="7">
    <original>T</original>
    <variation>A</variation>
    <location>
        <position position="674"/>
    </location>
</feature>
<feature type="mutagenesis site" description="Loss of interaction with 'Lys-63'-linked ubiquitin." evidence="7">
    <original>F</original>
    <variation>A</variation>
    <location>
        <position position="675"/>
    </location>
</feature>
<feature type="mutagenesis site" description="Loss of interaction with 'Lys-63'-linked ubiquitin." evidence="7">
    <original>H</original>
    <variation>Q</variation>
    <location>
        <position position="678"/>
    </location>
</feature>
<feature type="mutagenesis site" description="Loss of interaction with 'Lys-63'-linked ubiquitin." evidence="7">
    <original>L</original>
    <variation>T</variation>
    <location>
        <position position="681"/>
    </location>
</feature>
<feature type="mutagenesis site" description="Loss of interaction with 'Lys-63'-linked ubiquitin." evidence="7">
    <original>E</original>
    <variation>V</variation>
    <location>
        <position position="685"/>
    </location>
</feature>
<feature type="mutagenesis site" description="Confers ability to bind monoubiquitin and polyubiquitin, irrespective of the type of linkage." evidence="7">
    <original>Q</original>
    <variation>I</variation>
    <variation>M</variation>
    <location>
        <position position="686"/>
    </location>
</feature>
<feature type="sequence conflict" description="In Ref. 3; BAE28166." evidence="8" ref="3">
    <original>P</original>
    <variation>T</variation>
    <location>
        <position position="183"/>
    </location>
</feature>
<feature type="sequence conflict" description="In Ref. 3; BAC40772." evidence="8" ref="3">
    <original>V</original>
    <variation>F</variation>
    <location>
        <position position="476"/>
    </location>
</feature>
<feature type="sequence conflict" description="In Ref. 3; BAE28166." evidence="8" ref="3">
    <original>S</original>
    <variation>L</variation>
    <location>
        <position position="580"/>
    </location>
</feature>
<feature type="turn" evidence="12">
    <location>
        <begin position="671"/>
        <end position="673"/>
    </location>
</feature>
<feature type="turn" evidence="12">
    <location>
        <begin position="685"/>
        <end position="687"/>
    </location>
</feature>
<proteinExistence type="evidence at protein level"/>
<name>TAB2_MOUSE</name>
<gene>
    <name type="primary">Tab2</name>
    <name type="synonym">Kiaa0733</name>
    <name type="synonym">Map3k7ip2</name>
</gene>
<accession>Q99K90</accession>
<accession>Q3UGP1</accession>
<accession>Q8BTP4</accession>
<accession>Q8CHD3</accession>
<accession>Q99KP4</accession>